<feature type="chain" id="PRO_0000330938" description="LIM domain-containing protein G">
    <location>
        <begin position="1"/>
        <end position="281"/>
    </location>
</feature>
<feature type="domain" description="LIM zinc-binding 1" evidence="1">
    <location>
        <begin position="40"/>
        <end position="101"/>
    </location>
</feature>
<feature type="domain" description="LIM zinc-binding 2" evidence="1">
    <location>
        <begin position="141"/>
        <end position="205"/>
    </location>
</feature>
<feature type="domain" description="LIM zinc-binding 3" evidence="1">
    <location>
        <begin position="206"/>
        <end position="262"/>
    </location>
</feature>
<sequence>MSTETNNNLCIGCNKPFKSTDNIKTSNFKKYHEQCFSQDLNCSKCSGPIIASAEHKQVLGKIYHSKCFTCASCSKVLSDNDFSEISGIPCCKSCFTEIKFNPNFAISKFGSASAITQNDEKTKEKFEMKTNLYNNLQKGKDICTWCRNQIQADPDNEAVSFGGNIYHSNCFTCSKCSSSIGKNQFVTGSDGSAICKSCSDKSKQVNCFACKKPIDSTFTVVSGNKYHPNCFVCSQCKGSLEKGYIEKDGPVCGKCAATFTQPQTRTFAYSNGKGARPNGRW</sequence>
<name>LIMG_DICDI</name>
<accession>Q55DS4</accession>
<protein>
    <recommendedName>
        <fullName>LIM domain-containing protein G</fullName>
    </recommendedName>
</protein>
<keyword id="KW-0440">LIM domain</keyword>
<keyword id="KW-0479">Metal-binding</keyword>
<keyword id="KW-1185">Reference proteome</keyword>
<keyword id="KW-0677">Repeat</keyword>
<keyword id="KW-0862">Zinc</keyword>
<evidence type="ECO:0000255" key="1">
    <source>
        <dbReference type="PROSITE-ProRule" id="PRU00125"/>
    </source>
</evidence>
<organism>
    <name type="scientific">Dictyostelium discoideum</name>
    <name type="common">Social amoeba</name>
    <dbReference type="NCBI Taxonomy" id="44689"/>
    <lineage>
        <taxon>Eukaryota</taxon>
        <taxon>Amoebozoa</taxon>
        <taxon>Evosea</taxon>
        <taxon>Eumycetozoa</taxon>
        <taxon>Dictyostelia</taxon>
        <taxon>Dictyosteliales</taxon>
        <taxon>Dictyosteliaceae</taxon>
        <taxon>Dictyostelium</taxon>
    </lineage>
</organism>
<proteinExistence type="predicted"/>
<dbReference type="EMBL" id="AAFI02000005">
    <property type="protein sequence ID" value="EAL72124.1"/>
    <property type="molecule type" value="Genomic_DNA"/>
</dbReference>
<dbReference type="RefSeq" id="XP_646057.1">
    <property type="nucleotide sequence ID" value="XM_640965.1"/>
</dbReference>
<dbReference type="STRING" id="44689.Q55DS4"/>
<dbReference type="EnsemblProtists" id="EAL72124">
    <property type="protein sequence ID" value="EAL72124"/>
    <property type="gene ID" value="DDB_G0269548"/>
</dbReference>
<dbReference type="GeneID" id="8617005"/>
<dbReference type="KEGG" id="ddi:DDB_G0269548"/>
<dbReference type="dictyBase" id="DDB_G0269548">
    <property type="gene designation" value="limG"/>
</dbReference>
<dbReference type="VEuPathDB" id="AmoebaDB:DDB_G0269548"/>
<dbReference type="InParanoid" id="Q55DS4"/>
<dbReference type="OMA" id="CYEQQYA"/>
<dbReference type="PhylomeDB" id="Q55DS4"/>
<dbReference type="PRO" id="PR:Q55DS4"/>
<dbReference type="Proteomes" id="UP000002195">
    <property type="component" value="Chromosome 1"/>
</dbReference>
<dbReference type="GO" id="GO:0005634">
    <property type="term" value="C:nucleus"/>
    <property type="evidence" value="ECO:0000318"/>
    <property type="project" value="GO_Central"/>
</dbReference>
<dbReference type="GO" id="GO:0046872">
    <property type="term" value="F:metal ion binding"/>
    <property type="evidence" value="ECO:0007669"/>
    <property type="project" value="UniProtKB-KW"/>
</dbReference>
<dbReference type="GO" id="GO:0003712">
    <property type="term" value="F:transcription coregulator activity"/>
    <property type="evidence" value="ECO:0000318"/>
    <property type="project" value="GO_Central"/>
</dbReference>
<dbReference type="CDD" id="cd08368">
    <property type="entry name" value="LIM"/>
    <property type="match status" value="3"/>
</dbReference>
<dbReference type="Gene3D" id="2.10.110.10">
    <property type="entry name" value="Cysteine Rich Protein"/>
    <property type="match status" value="4"/>
</dbReference>
<dbReference type="InterPro" id="IPR001781">
    <property type="entry name" value="Znf_LIM"/>
</dbReference>
<dbReference type="PANTHER" id="PTHR24205">
    <property type="entry name" value="FOUR AND A HALF LIM DOMAINS PROTEIN"/>
    <property type="match status" value="1"/>
</dbReference>
<dbReference type="PANTHER" id="PTHR24205:SF16">
    <property type="entry name" value="GH01042P-RELATED"/>
    <property type="match status" value="1"/>
</dbReference>
<dbReference type="Pfam" id="PF00412">
    <property type="entry name" value="LIM"/>
    <property type="match status" value="3"/>
</dbReference>
<dbReference type="SMART" id="SM00132">
    <property type="entry name" value="LIM"/>
    <property type="match status" value="3"/>
</dbReference>
<dbReference type="SUPFAM" id="SSF57716">
    <property type="entry name" value="Glucocorticoid receptor-like (DNA-binding domain)"/>
    <property type="match status" value="2"/>
</dbReference>
<dbReference type="PROSITE" id="PS00478">
    <property type="entry name" value="LIM_DOMAIN_1"/>
    <property type="match status" value="3"/>
</dbReference>
<dbReference type="PROSITE" id="PS50023">
    <property type="entry name" value="LIM_DOMAIN_2"/>
    <property type="match status" value="3"/>
</dbReference>
<reference key="1">
    <citation type="journal article" date="2005" name="Nature">
        <title>The genome of the social amoeba Dictyostelium discoideum.</title>
        <authorList>
            <person name="Eichinger L."/>
            <person name="Pachebat J.A."/>
            <person name="Gloeckner G."/>
            <person name="Rajandream M.A."/>
            <person name="Sucgang R."/>
            <person name="Berriman M."/>
            <person name="Song J."/>
            <person name="Olsen R."/>
            <person name="Szafranski K."/>
            <person name="Xu Q."/>
            <person name="Tunggal B."/>
            <person name="Kummerfeld S."/>
            <person name="Madera M."/>
            <person name="Konfortov B.A."/>
            <person name="Rivero F."/>
            <person name="Bankier A.T."/>
            <person name="Lehmann R."/>
            <person name="Hamlin N."/>
            <person name="Davies R."/>
            <person name="Gaudet P."/>
            <person name="Fey P."/>
            <person name="Pilcher K."/>
            <person name="Chen G."/>
            <person name="Saunders D."/>
            <person name="Sodergren E.J."/>
            <person name="Davis P."/>
            <person name="Kerhornou A."/>
            <person name="Nie X."/>
            <person name="Hall N."/>
            <person name="Anjard C."/>
            <person name="Hemphill L."/>
            <person name="Bason N."/>
            <person name="Farbrother P."/>
            <person name="Desany B."/>
            <person name="Just E."/>
            <person name="Morio T."/>
            <person name="Rost R."/>
            <person name="Churcher C.M."/>
            <person name="Cooper J."/>
            <person name="Haydock S."/>
            <person name="van Driessche N."/>
            <person name="Cronin A."/>
            <person name="Goodhead I."/>
            <person name="Muzny D.M."/>
            <person name="Mourier T."/>
            <person name="Pain A."/>
            <person name="Lu M."/>
            <person name="Harper D."/>
            <person name="Lindsay R."/>
            <person name="Hauser H."/>
            <person name="James K.D."/>
            <person name="Quiles M."/>
            <person name="Madan Babu M."/>
            <person name="Saito T."/>
            <person name="Buchrieser C."/>
            <person name="Wardroper A."/>
            <person name="Felder M."/>
            <person name="Thangavelu M."/>
            <person name="Johnson D."/>
            <person name="Knights A."/>
            <person name="Loulseged H."/>
            <person name="Mungall K.L."/>
            <person name="Oliver K."/>
            <person name="Price C."/>
            <person name="Quail M.A."/>
            <person name="Urushihara H."/>
            <person name="Hernandez J."/>
            <person name="Rabbinowitsch E."/>
            <person name="Steffen D."/>
            <person name="Sanders M."/>
            <person name="Ma J."/>
            <person name="Kohara Y."/>
            <person name="Sharp S."/>
            <person name="Simmonds M.N."/>
            <person name="Spiegler S."/>
            <person name="Tivey A."/>
            <person name="Sugano S."/>
            <person name="White B."/>
            <person name="Walker D."/>
            <person name="Woodward J.R."/>
            <person name="Winckler T."/>
            <person name="Tanaka Y."/>
            <person name="Shaulsky G."/>
            <person name="Schleicher M."/>
            <person name="Weinstock G.M."/>
            <person name="Rosenthal A."/>
            <person name="Cox E.C."/>
            <person name="Chisholm R.L."/>
            <person name="Gibbs R.A."/>
            <person name="Loomis W.F."/>
            <person name="Platzer M."/>
            <person name="Kay R.R."/>
            <person name="Williams J.G."/>
            <person name="Dear P.H."/>
            <person name="Noegel A.A."/>
            <person name="Barrell B.G."/>
            <person name="Kuspa A."/>
        </authorList>
    </citation>
    <scope>NUCLEOTIDE SEQUENCE [LARGE SCALE GENOMIC DNA]</scope>
    <source>
        <strain>AX4</strain>
    </source>
</reference>
<gene>
    <name type="primary">limG</name>
    <name type="ORF">DDB_G0269548</name>
</gene>